<dbReference type="EC" id="2.1.1.228"/>
<dbReference type="EMBL" id="CR543861">
    <property type="protein sequence ID" value="CAG69984.1"/>
    <property type="molecule type" value="Genomic_DNA"/>
</dbReference>
<dbReference type="EMBL" id="X80800">
    <property type="protein sequence ID" value="CAA56781.1"/>
    <property type="molecule type" value="Genomic_DNA"/>
</dbReference>
<dbReference type="PIR" id="S61928">
    <property type="entry name" value="S61928"/>
</dbReference>
<dbReference type="RefSeq" id="WP_004923847.1">
    <property type="nucleotide sequence ID" value="NC_005966.1"/>
</dbReference>
<dbReference type="SMR" id="Q43963"/>
<dbReference type="STRING" id="202950.GCA_001485005_02155"/>
<dbReference type="GeneID" id="45235512"/>
<dbReference type="KEGG" id="aci:ACIAD3311"/>
<dbReference type="eggNOG" id="COG0336">
    <property type="taxonomic scope" value="Bacteria"/>
</dbReference>
<dbReference type="HOGENOM" id="CLU_047363_0_1_6"/>
<dbReference type="OrthoDB" id="9807416at2"/>
<dbReference type="BioCyc" id="ASP62977:ACIAD_RS14985-MONOMER"/>
<dbReference type="Proteomes" id="UP000000430">
    <property type="component" value="Chromosome"/>
</dbReference>
<dbReference type="GO" id="GO:0005829">
    <property type="term" value="C:cytosol"/>
    <property type="evidence" value="ECO:0007669"/>
    <property type="project" value="TreeGrafter"/>
</dbReference>
<dbReference type="GO" id="GO:0052906">
    <property type="term" value="F:tRNA (guanine(37)-N1)-methyltransferase activity"/>
    <property type="evidence" value="ECO:0007669"/>
    <property type="project" value="UniProtKB-UniRule"/>
</dbReference>
<dbReference type="GO" id="GO:0002939">
    <property type="term" value="P:tRNA N1-guanine methylation"/>
    <property type="evidence" value="ECO:0007669"/>
    <property type="project" value="TreeGrafter"/>
</dbReference>
<dbReference type="CDD" id="cd18080">
    <property type="entry name" value="TrmD-like"/>
    <property type="match status" value="1"/>
</dbReference>
<dbReference type="FunFam" id="1.10.1270.20:FF:000001">
    <property type="entry name" value="tRNA (guanine-N(1)-)-methyltransferase"/>
    <property type="match status" value="1"/>
</dbReference>
<dbReference type="FunFam" id="3.40.1280.10:FF:000001">
    <property type="entry name" value="tRNA (guanine-N(1)-)-methyltransferase"/>
    <property type="match status" value="1"/>
</dbReference>
<dbReference type="Gene3D" id="3.40.1280.10">
    <property type="match status" value="1"/>
</dbReference>
<dbReference type="Gene3D" id="1.10.1270.20">
    <property type="entry name" value="tRNA(m1g37)methyltransferase, domain 2"/>
    <property type="match status" value="1"/>
</dbReference>
<dbReference type="HAMAP" id="MF_00605">
    <property type="entry name" value="TrmD"/>
    <property type="match status" value="1"/>
</dbReference>
<dbReference type="InterPro" id="IPR029028">
    <property type="entry name" value="Alpha/beta_knot_MTases"/>
</dbReference>
<dbReference type="InterPro" id="IPR023148">
    <property type="entry name" value="tRNA_m1G_MeTrfase_C_sf"/>
</dbReference>
<dbReference type="InterPro" id="IPR002649">
    <property type="entry name" value="tRNA_m1G_MeTrfase_TrmD"/>
</dbReference>
<dbReference type="InterPro" id="IPR029026">
    <property type="entry name" value="tRNA_m1G_MTases_N"/>
</dbReference>
<dbReference type="InterPro" id="IPR016009">
    <property type="entry name" value="tRNA_MeTrfase_TRMD/TRM10"/>
</dbReference>
<dbReference type="NCBIfam" id="NF000648">
    <property type="entry name" value="PRK00026.1"/>
    <property type="match status" value="1"/>
</dbReference>
<dbReference type="NCBIfam" id="TIGR00088">
    <property type="entry name" value="trmD"/>
    <property type="match status" value="1"/>
</dbReference>
<dbReference type="PANTHER" id="PTHR46417">
    <property type="entry name" value="TRNA (GUANINE-N(1)-)-METHYLTRANSFERASE"/>
    <property type="match status" value="1"/>
</dbReference>
<dbReference type="PANTHER" id="PTHR46417:SF1">
    <property type="entry name" value="TRNA (GUANINE-N(1)-)-METHYLTRANSFERASE"/>
    <property type="match status" value="1"/>
</dbReference>
<dbReference type="Pfam" id="PF01746">
    <property type="entry name" value="tRNA_m1G_MT"/>
    <property type="match status" value="1"/>
</dbReference>
<dbReference type="PIRSF" id="PIRSF000386">
    <property type="entry name" value="tRNA_mtase"/>
    <property type="match status" value="1"/>
</dbReference>
<dbReference type="SUPFAM" id="SSF75217">
    <property type="entry name" value="alpha/beta knot"/>
    <property type="match status" value="1"/>
</dbReference>
<proteinExistence type="inferred from homology"/>
<name>TRMD_ACIAD</name>
<accession>Q43963</accession>
<accession>Q6F7I1</accession>
<reference key="1">
    <citation type="journal article" date="2004" name="Nucleic Acids Res.">
        <title>Unique features revealed by the genome sequence of Acinetobacter sp. ADP1, a versatile and naturally transformation competent bacterium.</title>
        <authorList>
            <person name="Barbe V."/>
            <person name="Vallenet D."/>
            <person name="Fonknechten N."/>
            <person name="Kreimeyer A."/>
            <person name="Oztas S."/>
            <person name="Labarre L."/>
            <person name="Cruveiller S."/>
            <person name="Robert C."/>
            <person name="Duprat S."/>
            <person name="Wincker P."/>
            <person name="Ornston L.N."/>
            <person name="Weissenbach J."/>
            <person name="Marliere P."/>
            <person name="Cohen G.N."/>
            <person name="Medigue C."/>
        </authorList>
    </citation>
    <scope>NUCLEOTIDE SEQUENCE [LARGE SCALE GENOMIC DNA]</scope>
    <source>
        <strain>ATCC 33305 / BD413 / ADP1</strain>
    </source>
</reference>
<reference key="2">
    <citation type="journal article" date="1995" name="J. Bacteriol.">
        <title>Characterization of lipase-deficient mutants of Acinetobacter calcoaceticus BD413: identification of a periplasmic lipase chaperone essential for the production of extracellular lipase.</title>
        <authorList>
            <person name="Kok R.G."/>
            <person name="Thor J.J."/>
            <person name="Nugteren-Roodzant I.M."/>
            <person name="Vosman B."/>
            <person name="Hellingwerf K.J."/>
        </authorList>
    </citation>
    <scope>NUCLEOTIDE SEQUENCE [GENOMIC DNA] OF 132-249</scope>
</reference>
<comment type="function">
    <text evidence="1">Specifically methylates guanosine-37 in various tRNAs.</text>
</comment>
<comment type="catalytic activity">
    <reaction>
        <text>guanosine(37) in tRNA + S-adenosyl-L-methionine = N(1)-methylguanosine(37) in tRNA + S-adenosyl-L-homocysteine + H(+)</text>
        <dbReference type="Rhea" id="RHEA:36899"/>
        <dbReference type="Rhea" id="RHEA-COMP:10145"/>
        <dbReference type="Rhea" id="RHEA-COMP:10147"/>
        <dbReference type="ChEBI" id="CHEBI:15378"/>
        <dbReference type="ChEBI" id="CHEBI:57856"/>
        <dbReference type="ChEBI" id="CHEBI:59789"/>
        <dbReference type="ChEBI" id="CHEBI:73542"/>
        <dbReference type="ChEBI" id="CHEBI:74269"/>
        <dbReference type="EC" id="2.1.1.228"/>
    </reaction>
</comment>
<comment type="subunit">
    <text evidence="1">Homodimer.</text>
</comment>
<comment type="subcellular location">
    <subcellularLocation>
        <location evidence="2">Cytoplasm</location>
    </subcellularLocation>
</comment>
<comment type="similarity">
    <text evidence="2">Belongs to the RNA methyltransferase TrmD family.</text>
</comment>
<organism>
    <name type="scientific">Acinetobacter baylyi (strain ATCC 33305 / BD413 / ADP1)</name>
    <dbReference type="NCBI Taxonomy" id="62977"/>
    <lineage>
        <taxon>Bacteria</taxon>
        <taxon>Pseudomonadati</taxon>
        <taxon>Pseudomonadota</taxon>
        <taxon>Gammaproteobacteria</taxon>
        <taxon>Moraxellales</taxon>
        <taxon>Moraxellaceae</taxon>
        <taxon>Acinetobacter</taxon>
    </lineage>
</organism>
<keyword id="KW-0963">Cytoplasm</keyword>
<keyword id="KW-0489">Methyltransferase</keyword>
<keyword id="KW-0949">S-adenosyl-L-methionine</keyword>
<keyword id="KW-0808">Transferase</keyword>
<keyword id="KW-0819">tRNA processing</keyword>
<feature type="chain" id="PRO_0000060313" description="tRNA (guanine-N(1)-)-methyltransferase">
    <location>
        <begin position="1"/>
        <end position="249"/>
    </location>
</feature>
<feature type="binding site" evidence="1">
    <location>
        <position position="117"/>
    </location>
    <ligand>
        <name>S-adenosyl-L-methionine</name>
        <dbReference type="ChEBI" id="CHEBI:59789"/>
    </ligand>
</feature>
<feature type="binding site" evidence="1">
    <location>
        <begin position="137"/>
        <end position="142"/>
    </location>
    <ligand>
        <name>S-adenosyl-L-methionine</name>
        <dbReference type="ChEBI" id="CHEBI:59789"/>
    </ligand>
</feature>
<evidence type="ECO:0000250" key="1"/>
<evidence type="ECO:0000305" key="2"/>
<protein>
    <recommendedName>
        <fullName>tRNA (guanine-N(1)-)-methyltransferase</fullName>
        <ecNumber>2.1.1.228</ecNumber>
    </recommendedName>
    <alternativeName>
        <fullName>M1G-methyltransferase</fullName>
    </alternativeName>
    <alternativeName>
        <fullName>tRNA [GM37] methyltransferase</fullName>
    </alternativeName>
</protein>
<gene>
    <name type="primary">trmD</name>
    <name type="ordered locus">ACIAD3311</name>
</gene>
<sequence length="249" mass="28287">MFFAVITLFPEMFEAITAYGISGRATKRQIATVSCINPRDFAEGNYKRVDERPFGGGPGMVMMAEPLAKAIIHAKQLAEQAGCVHAPVVYMSPQGKTLNEHAVQQFVDYDGLIVLCGRYEGVDERLIQHYVDQEWSIGDYVLSGGELPAMVLLDSIIRRLPDAMSDEQSHIQDSFVDGLLDCPQYTKPDHFEGLDVPEVLKSGHHANIEKWRFLQRYQRTLDRRPELVEKVTLTKQQRKWLTFLDDSKN</sequence>